<organism>
    <name type="scientific">Thermotoga petrophila (strain ATCC BAA-488 / DSM 13995 / JCM 10881 / RKU-1)</name>
    <dbReference type="NCBI Taxonomy" id="390874"/>
    <lineage>
        <taxon>Bacteria</taxon>
        <taxon>Thermotogati</taxon>
        <taxon>Thermotogota</taxon>
        <taxon>Thermotogae</taxon>
        <taxon>Thermotogales</taxon>
        <taxon>Thermotogaceae</taxon>
        <taxon>Thermotoga</taxon>
    </lineage>
</organism>
<accession>A5INL8</accession>
<feature type="chain" id="PRO_0000346292" description="D-ribose pyranase">
    <location>
        <begin position="1"/>
        <end position="135"/>
    </location>
</feature>
<feature type="active site" description="Proton donor" evidence="1">
    <location>
        <position position="20"/>
    </location>
</feature>
<feature type="binding site" evidence="1">
    <location>
        <position position="28"/>
    </location>
    <ligand>
        <name>substrate</name>
    </ligand>
</feature>
<feature type="binding site" evidence="1">
    <location>
        <position position="102"/>
    </location>
    <ligand>
        <name>substrate</name>
    </ligand>
</feature>
<feature type="binding site" evidence="1">
    <location>
        <begin position="124"/>
        <end position="126"/>
    </location>
    <ligand>
        <name>substrate</name>
    </ligand>
</feature>
<reference key="1">
    <citation type="submission" date="2007-05" db="EMBL/GenBank/DDBJ databases">
        <title>Complete sequence of Thermotoga petrophila RKU-1.</title>
        <authorList>
            <consortium name="US DOE Joint Genome Institute"/>
            <person name="Copeland A."/>
            <person name="Lucas S."/>
            <person name="Lapidus A."/>
            <person name="Barry K."/>
            <person name="Glavina del Rio T."/>
            <person name="Dalin E."/>
            <person name="Tice H."/>
            <person name="Pitluck S."/>
            <person name="Sims D."/>
            <person name="Brettin T."/>
            <person name="Bruce D."/>
            <person name="Detter J.C."/>
            <person name="Han C."/>
            <person name="Tapia R."/>
            <person name="Schmutz J."/>
            <person name="Larimer F."/>
            <person name="Land M."/>
            <person name="Hauser L."/>
            <person name="Kyrpides N."/>
            <person name="Mikhailova N."/>
            <person name="Nelson K."/>
            <person name="Gogarten J.P."/>
            <person name="Noll K."/>
            <person name="Richardson P."/>
        </authorList>
    </citation>
    <scope>NUCLEOTIDE SEQUENCE [LARGE SCALE GENOMIC DNA]</scope>
    <source>
        <strain>ATCC BAA-488 / DSM 13995 / JCM 10881 / RKU-1</strain>
    </source>
</reference>
<keyword id="KW-0119">Carbohydrate metabolism</keyword>
<keyword id="KW-0963">Cytoplasm</keyword>
<keyword id="KW-0413">Isomerase</keyword>
<sequence length="135" mass="14962">MKRVGILNSTISEMVANMGHTDMLAIVDMGFPIPDGAKKVDLVVDKGKPGLLEVVEVILKELEVEKIILAEEMNEKNPETRDLLINLVGKNNSNVKIEFVPHEEFKKISRTSKGFVRTGADRPYSNVILVSGVIF</sequence>
<protein>
    <recommendedName>
        <fullName evidence="1">D-ribose pyranase</fullName>
        <ecNumber evidence="1">5.4.99.62</ecNumber>
    </recommendedName>
</protein>
<gene>
    <name evidence="1" type="primary">rbsD</name>
    <name type="ordered locus">Tpet_1791</name>
</gene>
<comment type="function">
    <text evidence="1">Catalyzes the interconversion of beta-pyran and beta-furan forms of D-ribose.</text>
</comment>
<comment type="catalytic activity">
    <reaction evidence="1">
        <text>beta-D-ribopyranose = beta-D-ribofuranose</text>
        <dbReference type="Rhea" id="RHEA:25432"/>
        <dbReference type="ChEBI" id="CHEBI:27476"/>
        <dbReference type="ChEBI" id="CHEBI:47002"/>
        <dbReference type="EC" id="5.4.99.62"/>
    </reaction>
</comment>
<comment type="pathway">
    <text evidence="1">Carbohydrate metabolism; D-ribose degradation; D-ribose 5-phosphate from beta-D-ribopyranose: step 1/2.</text>
</comment>
<comment type="subunit">
    <text evidence="1">Homodecamer.</text>
</comment>
<comment type="subcellular location">
    <subcellularLocation>
        <location evidence="1">Cytoplasm</location>
    </subcellularLocation>
</comment>
<comment type="similarity">
    <text evidence="1">Belongs to the RbsD / FucU family. RbsD subfamily.</text>
</comment>
<evidence type="ECO:0000255" key="1">
    <source>
        <dbReference type="HAMAP-Rule" id="MF_01661"/>
    </source>
</evidence>
<name>RBSD_THEP1</name>
<dbReference type="EC" id="5.4.99.62" evidence="1"/>
<dbReference type="EMBL" id="CP000702">
    <property type="protein sequence ID" value="ABQ47791.1"/>
    <property type="molecule type" value="Genomic_DNA"/>
</dbReference>
<dbReference type="RefSeq" id="WP_011944195.1">
    <property type="nucleotide sequence ID" value="NC_009486.1"/>
</dbReference>
<dbReference type="SMR" id="A5INL8"/>
<dbReference type="STRING" id="390874.Tpet_1791"/>
<dbReference type="KEGG" id="tpt:Tpet_1791"/>
<dbReference type="eggNOG" id="COG1869">
    <property type="taxonomic scope" value="Bacteria"/>
</dbReference>
<dbReference type="HOGENOM" id="CLU_135498_0_0_0"/>
<dbReference type="UniPathway" id="UPA00916">
    <property type="reaction ID" value="UER00888"/>
</dbReference>
<dbReference type="Proteomes" id="UP000006558">
    <property type="component" value="Chromosome"/>
</dbReference>
<dbReference type="GO" id="GO:0005829">
    <property type="term" value="C:cytosol"/>
    <property type="evidence" value="ECO:0007669"/>
    <property type="project" value="TreeGrafter"/>
</dbReference>
<dbReference type="GO" id="GO:0062193">
    <property type="term" value="F:D-ribose pyranase activity"/>
    <property type="evidence" value="ECO:0007669"/>
    <property type="project" value="UniProtKB-EC"/>
</dbReference>
<dbReference type="GO" id="GO:0016872">
    <property type="term" value="F:intramolecular lyase activity"/>
    <property type="evidence" value="ECO:0007669"/>
    <property type="project" value="UniProtKB-UniRule"/>
</dbReference>
<dbReference type="GO" id="GO:0048029">
    <property type="term" value="F:monosaccharide binding"/>
    <property type="evidence" value="ECO:0007669"/>
    <property type="project" value="InterPro"/>
</dbReference>
<dbReference type="GO" id="GO:0019303">
    <property type="term" value="P:D-ribose catabolic process"/>
    <property type="evidence" value="ECO:0007669"/>
    <property type="project" value="UniProtKB-UniRule"/>
</dbReference>
<dbReference type="FunFam" id="3.40.1650.10:FF:000004">
    <property type="entry name" value="D-ribose pyranase"/>
    <property type="match status" value="1"/>
</dbReference>
<dbReference type="Gene3D" id="3.40.1650.10">
    <property type="entry name" value="RbsD-like domain"/>
    <property type="match status" value="1"/>
</dbReference>
<dbReference type="HAMAP" id="MF_01661">
    <property type="entry name" value="D_rib_pyranase"/>
    <property type="match status" value="1"/>
</dbReference>
<dbReference type="InterPro" id="IPR023064">
    <property type="entry name" value="D-ribose_pyranase"/>
</dbReference>
<dbReference type="InterPro" id="IPR023750">
    <property type="entry name" value="RbsD-like_sf"/>
</dbReference>
<dbReference type="InterPro" id="IPR007721">
    <property type="entry name" value="RbsD_FucU"/>
</dbReference>
<dbReference type="NCBIfam" id="NF008761">
    <property type="entry name" value="PRK11797.1"/>
    <property type="match status" value="1"/>
</dbReference>
<dbReference type="PANTHER" id="PTHR37831">
    <property type="entry name" value="D-RIBOSE PYRANASE"/>
    <property type="match status" value="1"/>
</dbReference>
<dbReference type="PANTHER" id="PTHR37831:SF1">
    <property type="entry name" value="D-RIBOSE PYRANASE"/>
    <property type="match status" value="1"/>
</dbReference>
<dbReference type="Pfam" id="PF05025">
    <property type="entry name" value="RbsD_FucU"/>
    <property type="match status" value="1"/>
</dbReference>
<dbReference type="SUPFAM" id="SSF102546">
    <property type="entry name" value="RbsD-like"/>
    <property type="match status" value="1"/>
</dbReference>
<proteinExistence type="inferred from homology"/>